<name>MUTL_SHEB9</name>
<gene>
    <name evidence="1" type="primary">mutL</name>
    <name type="ordered locus">Sbal195_3895</name>
</gene>
<organism>
    <name type="scientific">Shewanella baltica (strain OS195)</name>
    <dbReference type="NCBI Taxonomy" id="399599"/>
    <lineage>
        <taxon>Bacteria</taxon>
        <taxon>Pseudomonadati</taxon>
        <taxon>Pseudomonadota</taxon>
        <taxon>Gammaproteobacteria</taxon>
        <taxon>Alteromonadales</taxon>
        <taxon>Shewanellaceae</taxon>
        <taxon>Shewanella</taxon>
    </lineage>
</organism>
<feature type="chain" id="PRO_1000076710" description="DNA mismatch repair protein MutL">
    <location>
        <begin position="1"/>
        <end position="638"/>
    </location>
</feature>
<feature type="region of interest" description="Disordered" evidence="2">
    <location>
        <begin position="404"/>
        <end position="433"/>
    </location>
</feature>
<dbReference type="EMBL" id="CP000891">
    <property type="protein sequence ID" value="ABX51055.1"/>
    <property type="molecule type" value="Genomic_DNA"/>
</dbReference>
<dbReference type="SMR" id="A9L3W1"/>
<dbReference type="KEGG" id="sbn:Sbal195_3895"/>
<dbReference type="HOGENOM" id="CLU_004131_4_2_6"/>
<dbReference type="Proteomes" id="UP000000770">
    <property type="component" value="Chromosome"/>
</dbReference>
<dbReference type="GO" id="GO:0032300">
    <property type="term" value="C:mismatch repair complex"/>
    <property type="evidence" value="ECO:0007669"/>
    <property type="project" value="InterPro"/>
</dbReference>
<dbReference type="GO" id="GO:0005524">
    <property type="term" value="F:ATP binding"/>
    <property type="evidence" value="ECO:0007669"/>
    <property type="project" value="InterPro"/>
</dbReference>
<dbReference type="GO" id="GO:0016887">
    <property type="term" value="F:ATP hydrolysis activity"/>
    <property type="evidence" value="ECO:0007669"/>
    <property type="project" value="InterPro"/>
</dbReference>
<dbReference type="GO" id="GO:0140664">
    <property type="term" value="F:ATP-dependent DNA damage sensor activity"/>
    <property type="evidence" value="ECO:0007669"/>
    <property type="project" value="InterPro"/>
</dbReference>
<dbReference type="GO" id="GO:0030983">
    <property type="term" value="F:mismatched DNA binding"/>
    <property type="evidence" value="ECO:0007669"/>
    <property type="project" value="InterPro"/>
</dbReference>
<dbReference type="GO" id="GO:0006298">
    <property type="term" value="P:mismatch repair"/>
    <property type="evidence" value="ECO:0007669"/>
    <property type="project" value="UniProtKB-UniRule"/>
</dbReference>
<dbReference type="CDD" id="cd16926">
    <property type="entry name" value="HATPase_MutL-MLH-PMS-like"/>
    <property type="match status" value="1"/>
</dbReference>
<dbReference type="CDD" id="cd03482">
    <property type="entry name" value="MutL_Trans_MutL"/>
    <property type="match status" value="1"/>
</dbReference>
<dbReference type="FunFam" id="3.30.230.10:FF:000013">
    <property type="entry name" value="DNA mismatch repair endonuclease MutL"/>
    <property type="match status" value="1"/>
</dbReference>
<dbReference type="FunFam" id="3.30.565.10:FF:000003">
    <property type="entry name" value="DNA mismatch repair endonuclease MutL"/>
    <property type="match status" value="1"/>
</dbReference>
<dbReference type="Gene3D" id="3.30.230.10">
    <property type="match status" value="1"/>
</dbReference>
<dbReference type="Gene3D" id="3.30.565.10">
    <property type="entry name" value="Histidine kinase-like ATPase, C-terminal domain"/>
    <property type="match status" value="1"/>
</dbReference>
<dbReference type="Gene3D" id="3.30.1370.100">
    <property type="entry name" value="MutL, C-terminal domain, regulatory subdomain"/>
    <property type="match status" value="1"/>
</dbReference>
<dbReference type="HAMAP" id="MF_00149">
    <property type="entry name" value="DNA_mis_repair"/>
    <property type="match status" value="1"/>
</dbReference>
<dbReference type="InterPro" id="IPR014762">
    <property type="entry name" value="DNA_mismatch_repair_CS"/>
</dbReference>
<dbReference type="InterPro" id="IPR020667">
    <property type="entry name" value="DNA_mismatch_repair_MutL"/>
</dbReference>
<dbReference type="InterPro" id="IPR013507">
    <property type="entry name" value="DNA_mismatch_S5_2-like"/>
</dbReference>
<dbReference type="InterPro" id="IPR036890">
    <property type="entry name" value="HATPase_C_sf"/>
</dbReference>
<dbReference type="InterPro" id="IPR002099">
    <property type="entry name" value="MutL/Mlh/PMS"/>
</dbReference>
<dbReference type="InterPro" id="IPR038973">
    <property type="entry name" value="MutL/Mlh/Pms-like"/>
</dbReference>
<dbReference type="InterPro" id="IPR014790">
    <property type="entry name" value="MutL_C"/>
</dbReference>
<dbReference type="InterPro" id="IPR042121">
    <property type="entry name" value="MutL_C_regsub"/>
</dbReference>
<dbReference type="InterPro" id="IPR037198">
    <property type="entry name" value="MutL_C_sf"/>
</dbReference>
<dbReference type="InterPro" id="IPR020568">
    <property type="entry name" value="Ribosomal_Su5_D2-typ_SF"/>
</dbReference>
<dbReference type="InterPro" id="IPR014721">
    <property type="entry name" value="Ribsml_uS5_D2-typ_fold_subgr"/>
</dbReference>
<dbReference type="NCBIfam" id="TIGR00585">
    <property type="entry name" value="mutl"/>
    <property type="match status" value="1"/>
</dbReference>
<dbReference type="NCBIfam" id="NF000948">
    <property type="entry name" value="PRK00095.1-1"/>
    <property type="match status" value="1"/>
</dbReference>
<dbReference type="PANTHER" id="PTHR10073">
    <property type="entry name" value="DNA MISMATCH REPAIR PROTEIN MLH, PMS, MUTL"/>
    <property type="match status" value="1"/>
</dbReference>
<dbReference type="PANTHER" id="PTHR10073:SF12">
    <property type="entry name" value="DNA MISMATCH REPAIR PROTEIN MLH1"/>
    <property type="match status" value="1"/>
</dbReference>
<dbReference type="Pfam" id="PF01119">
    <property type="entry name" value="DNA_mis_repair"/>
    <property type="match status" value="1"/>
</dbReference>
<dbReference type="Pfam" id="PF13589">
    <property type="entry name" value="HATPase_c_3"/>
    <property type="match status" value="1"/>
</dbReference>
<dbReference type="Pfam" id="PF08676">
    <property type="entry name" value="MutL_C"/>
    <property type="match status" value="1"/>
</dbReference>
<dbReference type="SMART" id="SM01340">
    <property type="entry name" value="DNA_mis_repair"/>
    <property type="match status" value="1"/>
</dbReference>
<dbReference type="SMART" id="SM00853">
    <property type="entry name" value="MutL_C"/>
    <property type="match status" value="1"/>
</dbReference>
<dbReference type="SUPFAM" id="SSF55874">
    <property type="entry name" value="ATPase domain of HSP90 chaperone/DNA topoisomerase II/histidine kinase"/>
    <property type="match status" value="1"/>
</dbReference>
<dbReference type="SUPFAM" id="SSF118116">
    <property type="entry name" value="DNA mismatch repair protein MutL"/>
    <property type="match status" value="1"/>
</dbReference>
<dbReference type="SUPFAM" id="SSF54211">
    <property type="entry name" value="Ribosomal protein S5 domain 2-like"/>
    <property type="match status" value="1"/>
</dbReference>
<dbReference type="PROSITE" id="PS00058">
    <property type="entry name" value="DNA_MISMATCH_REPAIR_1"/>
    <property type="match status" value="1"/>
</dbReference>
<proteinExistence type="inferred from homology"/>
<protein>
    <recommendedName>
        <fullName evidence="1">DNA mismatch repair protein MutL</fullName>
    </recommendedName>
</protein>
<evidence type="ECO:0000255" key="1">
    <source>
        <dbReference type="HAMAP-Rule" id="MF_00149"/>
    </source>
</evidence>
<evidence type="ECO:0000256" key="2">
    <source>
        <dbReference type="SAM" id="MobiDB-lite"/>
    </source>
</evidence>
<accession>A9L3W1</accession>
<comment type="function">
    <text evidence="1">This protein is involved in the repair of mismatches in DNA. It is required for dam-dependent methyl-directed DNA mismatch repair. May act as a 'molecular matchmaker', a protein that promotes the formation of a stable complex between two or more DNA-binding proteins in an ATP-dependent manner without itself being part of a final effector complex.</text>
</comment>
<comment type="similarity">
    <text evidence="1">Belongs to the DNA mismatch repair MutL/HexB family.</text>
</comment>
<keyword id="KW-0227">DNA damage</keyword>
<keyword id="KW-0234">DNA repair</keyword>
<reference key="1">
    <citation type="submission" date="2007-11" db="EMBL/GenBank/DDBJ databases">
        <title>Complete sequence of chromosome of Shewanella baltica OS195.</title>
        <authorList>
            <consortium name="US DOE Joint Genome Institute"/>
            <person name="Copeland A."/>
            <person name="Lucas S."/>
            <person name="Lapidus A."/>
            <person name="Barry K."/>
            <person name="Glavina del Rio T."/>
            <person name="Dalin E."/>
            <person name="Tice H."/>
            <person name="Pitluck S."/>
            <person name="Chain P."/>
            <person name="Malfatti S."/>
            <person name="Shin M."/>
            <person name="Vergez L."/>
            <person name="Schmutz J."/>
            <person name="Larimer F."/>
            <person name="Land M."/>
            <person name="Hauser L."/>
            <person name="Kyrpides N."/>
            <person name="Kim E."/>
            <person name="Brettar I."/>
            <person name="Rodrigues J."/>
            <person name="Konstantinidis K."/>
            <person name="Klappenbach J."/>
            <person name="Hofle M."/>
            <person name="Tiedje J."/>
            <person name="Richardson P."/>
        </authorList>
    </citation>
    <scope>NUCLEOTIDE SEQUENCE [LARGE SCALE GENOMIC DNA]</scope>
    <source>
        <strain>OS195</strain>
    </source>
</reference>
<sequence>MMGIQILPPQLANQIAAGEVVERPASVVKELVENSLDAGASRVDIEIDKGGSKLIKIRDNGSGIPKDELALALSRHATSKLHTLDDLEAILSFGFRGEALASISSVSRLTLTSRTADQTEAWQAHAEGADMAVKVMPAAHPVGSTIEVVDLFFNTPARRRFLKSDKTEFTHIDEWLKRIALVRGDIHLTLTHNGKTVRNYRPAMNEAQYLQRLTQVSGRPFAEQALKIECQHDDLRLSGYLQSPWSPVISDTHYFYVNGRLIRDRLVNHAVRQAFAQKAELEQPGYVLMLDIDPHQVDVNVHPAKHEVRFHQSRYVHDYILQALQSALEEAGELNFVHSSSLDEVEDVFVDAPTSATEISAPFVLGADSAQVNVPADTLESAQPLVASAVQVKSAGAGREGASFGTQTNAFGSMATPRDNSRGNYSAGESRQRTELPSKAAIASYGALLQTPSYSVKDQDYQPSLPMPAILDGQYWVMATADKLSLLPIKSVALATRCQEIEAKLATGLIGQPLLMPVSVAADADWQAVLDEHDTLIRQLGLELTIRYQQLIIKKVPPYIRESQLAKVIPEWLQSLRFETPAPSALAFWLAKHSLTGFVSAPEIWAAFSQLAEEKKQLIANKAILLPWQSWLEEQASE</sequence>